<comment type="function">
    <text evidence="1">Catalyzes the removal of a penultimate prolyl residue from the N-termini of peptides.</text>
</comment>
<comment type="catalytic activity">
    <reaction>
        <text>Release of any N-terminal amino acid, including proline, that is linked to proline, even from a dipeptide or tripeptide.</text>
        <dbReference type="EC" id="3.4.11.9"/>
    </reaction>
</comment>
<comment type="cofactor">
    <cofactor evidence="1">
        <name>Mn(2+)</name>
        <dbReference type="ChEBI" id="CHEBI:29035"/>
    </cofactor>
    <text evidence="1">Binds 2 manganese ions per subunit.</text>
</comment>
<comment type="similarity">
    <text evidence="2">Belongs to the peptidase M24B family.</text>
</comment>
<proteinExistence type="inferred from homology"/>
<keyword id="KW-0031">Aminopeptidase</keyword>
<keyword id="KW-0378">Hydrolase</keyword>
<keyword id="KW-0464">Manganese</keyword>
<keyword id="KW-0479">Metal-binding</keyword>
<keyword id="KW-0482">Metalloprotease</keyword>
<keyword id="KW-0645">Protease</keyword>
<evidence type="ECO:0000250" key="1"/>
<evidence type="ECO:0000305" key="2"/>
<sequence>MRGSGRSDIVISAVDALDICITLARNDCDKYPGSVAAKLGVSSGLIYLVGQPTINWGDSDQPRPFRQRRYFYYLSGVEEADCYLTYDIKNDLLTLYVPDFDLHRAIWMGPTLTVKEARERYDVDQVRYHASLKGDIQRWADNYNKTSLLYILHDTQKPQVLSNELRLDDELLLPAMDAARGIKDEHEIRMIREANRVSALAHRKVLENVLRMSTEAEIEGLFLDTCISHGAKNQAYEIIAGSGENAAVLHYVKNNEPLQGRQLVCLDAGAEWNCYASDVTRTFPLAADWPTARARDIYQLVEEMQEECIKRIQKGVRFLDLQVLAHVIAIEGLMRLGILKGGSVEEIRESGASTVFFPHGLGHHVGLEVHDVSAKRLTAVEGDKEYYSSILVPSMSHCPCTLSAPLLEEGMVVTVEPGIYFSRLALANARKLAFAKYINFDEAEKYIPIGGVRIEDDILVTSSGHENLTTAPKGEEMLEIIRRGIDS</sequence>
<name>AMPP2_ASPFC</name>
<protein>
    <recommendedName>
        <fullName>Probable Xaa-Pro aminopeptidase AFUB_014460</fullName>
        <ecNumber>3.4.11.9</ecNumber>
    </recommendedName>
    <alternativeName>
        <fullName>Aminoacylproline aminopeptidase</fullName>
    </alternativeName>
    <alternativeName>
        <fullName>Prolidase</fullName>
    </alternativeName>
</protein>
<accession>B0XN37</accession>
<gene>
    <name type="ORF">AFUB_014460</name>
</gene>
<dbReference type="EC" id="3.4.11.9"/>
<dbReference type="EMBL" id="DS499594">
    <property type="protein sequence ID" value="EDP56727.1"/>
    <property type="molecule type" value="Genomic_DNA"/>
</dbReference>
<dbReference type="SMR" id="B0XN37"/>
<dbReference type="EnsemblFungi" id="EDP56727">
    <property type="protein sequence ID" value="EDP56727"/>
    <property type="gene ID" value="AFUB_014460"/>
</dbReference>
<dbReference type="HOGENOM" id="CLU_017266_1_2_1"/>
<dbReference type="OrthoDB" id="50604at5052"/>
<dbReference type="PhylomeDB" id="B0XN37"/>
<dbReference type="Proteomes" id="UP000001699">
    <property type="component" value="Unassembled WGS sequence"/>
</dbReference>
<dbReference type="GO" id="GO:0030145">
    <property type="term" value="F:manganese ion binding"/>
    <property type="evidence" value="ECO:0007669"/>
    <property type="project" value="InterPro"/>
</dbReference>
<dbReference type="GO" id="GO:0070006">
    <property type="term" value="F:metalloaminopeptidase activity"/>
    <property type="evidence" value="ECO:0007669"/>
    <property type="project" value="InterPro"/>
</dbReference>
<dbReference type="GO" id="GO:0006508">
    <property type="term" value="P:proteolysis"/>
    <property type="evidence" value="ECO:0007669"/>
    <property type="project" value="UniProtKB-KW"/>
</dbReference>
<dbReference type="CDD" id="cd01087">
    <property type="entry name" value="Prolidase"/>
    <property type="match status" value="1"/>
</dbReference>
<dbReference type="Gene3D" id="3.90.230.10">
    <property type="entry name" value="Creatinase/methionine aminopeptidase superfamily"/>
    <property type="match status" value="1"/>
</dbReference>
<dbReference type="Gene3D" id="3.40.350.10">
    <property type="entry name" value="Creatinase/prolidase N-terminal domain"/>
    <property type="match status" value="1"/>
</dbReference>
<dbReference type="InterPro" id="IPR007865">
    <property type="entry name" value="Aminopep_P_N"/>
</dbReference>
<dbReference type="InterPro" id="IPR029149">
    <property type="entry name" value="Creatin/AminoP/Spt16_N"/>
</dbReference>
<dbReference type="InterPro" id="IPR036005">
    <property type="entry name" value="Creatinase/aminopeptidase-like"/>
</dbReference>
<dbReference type="InterPro" id="IPR000994">
    <property type="entry name" value="Pept_M24"/>
</dbReference>
<dbReference type="InterPro" id="IPR001131">
    <property type="entry name" value="Peptidase_M24B_aminopep-P_CS"/>
</dbReference>
<dbReference type="InterPro" id="IPR052433">
    <property type="entry name" value="X-Pro_dipept-like"/>
</dbReference>
<dbReference type="PANTHER" id="PTHR43226">
    <property type="entry name" value="XAA-PRO AMINOPEPTIDASE 3"/>
    <property type="match status" value="1"/>
</dbReference>
<dbReference type="PANTHER" id="PTHR43226:SF3">
    <property type="entry name" value="XAA-PRO AMINOPEPTIDASE AN0832-RELATED"/>
    <property type="match status" value="1"/>
</dbReference>
<dbReference type="Pfam" id="PF05195">
    <property type="entry name" value="AMP_N"/>
    <property type="match status" value="1"/>
</dbReference>
<dbReference type="Pfam" id="PF00557">
    <property type="entry name" value="Peptidase_M24"/>
    <property type="match status" value="1"/>
</dbReference>
<dbReference type="SMART" id="SM01011">
    <property type="entry name" value="AMP_N"/>
    <property type="match status" value="1"/>
</dbReference>
<dbReference type="SUPFAM" id="SSF55920">
    <property type="entry name" value="Creatinase/aminopeptidase"/>
    <property type="match status" value="1"/>
</dbReference>
<dbReference type="SUPFAM" id="SSF53092">
    <property type="entry name" value="Creatinase/prolidase N-terminal domain"/>
    <property type="match status" value="1"/>
</dbReference>
<dbReference type="PROSITE" id="PS00491">
    <property type="entry name" value="PROLINE_PEPTIDASE"/>
    <property type="match status" value="1"/>
</dbReference>
<organism>
    <name type="scientific">Aspergillus fumigatus (strain CBS 144.89 / FGSC A1163 / CEA10)</name>
    <name type="common">Neosartorya fumigata</name>
    <dbReference type="NCBI Taxonomy" id="451804"/>
    <lineage>
        <taxon>Eukaryota</taxon>
        <taxon>Fungi</taxon>
        <taxon>Dikarya</taxon>
        <taxon>Ascomycota</taxon>
        <taxon>Pezizomycotina</taxon>
        <taxon>Eurotiomycetes</taxon>
        <taxon>Eurotiomycetidae</taxon>
        <taxon>Eurotiales</taxon>
        <taxon>Aspergillaceae</taxon>
        <taxon>Aspergillus</taxon>
        <taxon>Aspergillus subgen. Fumigati</taxon>
    </lineage>
</organism>
<feature type="chain" id="PRO_0000411824" description="Probable Xaa-Pro aminopeptidase AFUB_014460">
    <location>
        <begin position="1"/>
        <end position="487"/>
    </location>
</feature>
<feature type="binding site" evidence="1">
    <location>
        <position position="267"/>
    </location>
    <ligand>
        <name>Mn(2+)</name>
        <dbReference type="ChEBI" id="CHEBI:29035"/>
        <label>2</label>
    </ligand>
</feature>
<feature type="binding site" evidence="1">
    <location>
        <position position="278"/>
    </location>
    <ligand>
        <name>Mn(2+)</name>
        <dbReference type="ChEBI" id="CHEBI:29035"/>
        <label>1</label>
    </ligand>
</feature>
<feature type="binding site" evidence="1">
    <location>
        <position position="278"/>
    </location>
    <ligand>
        <name>Mn(2+)</name>
        <dbReference type="ChEBI" id="CHEBI:29035"/>
        <label>2</label>
    </ligand>
</feature>
<feature type="binding site" evidence="1">
    <location>
        <position position="416"/>
    </location>
    <ligand>
        <name>Mn(2+)</name>
        <dbReference type="ChEBI" id="CHEBI:29035"/>
        <label>1</label>
    </ligand>
</feature>
<feature type="binding site" evidence="1">
    <location>
        <position position="455"/>
    </location>
    <ligand>
        <name>Mn(2+)</name>
        <dbReference type="ChEBI" id="CHEBI:29035"/>
        <label>1</label>
    </ligand>
</feature>
<feature type="binding site" evidence="1">
    <location>
        <position position="455"/>
    </location>
    <ligand>
        <name>Mn(2+)</name>
        <dbReference type="ChEBI" id="CHEBI:29035"/>
        <label>2</label>
    </ligand>
</feature>
<reference key="1">
    <citation type="journal article" date="2008" name="PLoS Genet.">
        <title>Genomic islands in the pathogenic filamentous fungus Aspergillus fumigatus.</title>
        <authorList>
            <person name="Fedorova N.D."/>
            <person name="Khaldi N."/>
            <person name="Joardar V.S."/>
            <person name="Maiti R."/>
            <person name="Amedeo P."/>
            <person name="Anderson M.J."/>
            <person name="Crabtree J."/>
            <person name="Silva J.C."/>
            <person name="Badger J.H."/>
            <person name="Albarraq A."/>
            <person name="Angiuoli S."/>
            <person name="Bussey H."/>
            <person name="Bowyer P."/>
            <person name="Cotty P.J."/>
            <person name="Dyer P.S."/>
            <person name="Egan A."/>
            <person name="Galens K."/>
            <person name="Fraser-Liggett C.M."/>
            <person name="Haas B.J."/>
            <person name="Inman J.M."/>
            <person name="Kent R."/>
            <person name="Lemieux S."/>
            <person name="Malavazi I."/>
            <person name="Orvis J."/>
            <person name="Roemer T."/>
            <person name="Ronning C.M."/>
            <person name="Sundaram J.P."/>
            <person name="Sutton G."/>
            <person name="Turner G."/>
            <person name="Venter J.C."/>
            <person name="White O.R."/>
            <person name="Whitty B.R."/>
            <person name="Youngman P."/>
            <person name="Wolfe K.H."/>
            <person name="Goldman G.H."/>
            <person name="Wortman J.R."/>
            <person name="Jiang B."/>
            <person name="Denning D.W."/>
            <person name="Nierman W.C."/>
        </authorList>
    </citation>
    <scope>NUCLEOTIDE SEQUENCE [LARGE SCALE GENOMIC DNA]</scope>
    <source>
        <strain>CBS 144.89 / FGSC A1163 / CEA10</strain>
    </source>
</reference>